<feature type="chain" id="PRO_0000089397" description="HAUS augmin-like complex subunit 1">
    <location>
        <begin position="1"/>
        <end position="278"/>
    </location>
</feature>
<feature type="coiled-coil region" evidence="3">
    <location>
        <begin position="128"/>
        <end position="150"/>
    </location>
</feature>
<feature type="coiled-coil region" evidence="3">
    <location>
        <begin position="248"/>
        <end position="278"/>
    </location>
</feature>
<feature type="sequence conflict" description="In Ref. 1; AAF00052." evidence="4" ref="1">
    <original>Q</original>
    <variation>P</variation>
    <location>
        <position position="60"/>
    </location>
</feature>
<proteinExistence type="evidence at transcript level"/>
<gene>
    <name type="primary">Haus1</name>
    <name type="synonym">Ccdc5</name>
</gene>
<keyword id="KW-0131">Cell cycle</keyword>
<keyword id="KW-0132">Cell division</keyword>
<keyword id="KW-0175">Coiled coil</keyword>
<keyword id="KW-0963">Cytoplasm</keyword>
<keyword id="KW-0206">Cytoskeleton</keyword>
<keyword id="KW-0493">Microtubule</keyword>
<keyword id="KW-0498">Mitosis</keyword>
<keyword id="KW-1185">Reference proteome</keyword>
<sequence>MAALEEKASQVAEWLKKIFGDHPIPQYEMNARTTEILYHLSERNRVRDRDVNLVIEDLRQKASEYESEAKRLEDFLMESVNFSPANLSNTGSRFLNALVDSAIALEIKDTSLASFIPAVNDLTSDLFRTKSKSEEIKLELGKLEKNLTATLVLEKCLREDLKKADVHLSAERAKAEGRLQNMDFLKAKAAEFRFGIRAAEEQLSSRGMDASLSHRSLVALSDKLSELKQQTIPLKKKLESYLDLMPNPSLAQVKIEEAKRELDAIEAELTKKVDMMEL</sequence>
<dbReference type="EMBL" id="AF092207">
    <property type="protein sequence ID" value="AAF00052.1"/>
    <property type="molecule type" value="mRNA"/>
</dbReference>
<dbReference type="EMBL" id="CH474069">
    <property type="protein sequence ID" value="EDL84703.1"/>
    <property type="molecule type" value="Genomic_DNA"/>
</dbReference>
<dbReference type="EMBL" id="BC127484">
    <property type="protein sequence ID" value="AAI27485.1"/>
    <property type="molecule type" value="mRNA"/>
</dbReference>
<dbReference type="RefSeq" id="NP_620219.2">
    <property type="nucleotide sequence ID" value="NM_138864.2"/>
</dbReference>
<dbReference type="RefSeq" id="XP_017443387.1">
    <property type="nucleotide sequence ID" value="XM_017587898.1"/>
</dbReference>
<dbReference type="RefSeq" id="XP_017456627.1">
    <property type="nucleotide sequence ID" value="XM_017601138.1"/>
</dbReference>
<dbReference type="SMR" id="Q9R0A8"/>
<dbReference type="FunCoup" id="Q9R0A8">
    <property type="interactions" value="859"/>
</dbReference>
<dbReference type="STRING" id="10116.ENSRNOP00000023100"/>
<dbReference type="PhosphoSitePlus" id="Q9R0A8"/>
<dbReference type="jPOST" id="Q9R0A8"/>
<dbReference type="PaxDb" id="10116-ENSRNOP00000023100"/>
<dbReference type="Ensembl" id="ENSRNOT00000073597.3">
    <property type="protein sequence ID" value="ENSRNOP00000067804.1"/>
    <property type="gene ID" value="ENSRNOG00000017067.6"/>
</dbReference>
<dbReference type="GeneID" id="192228"/>
<dbReference type="KEGG" id="rno:192228"/>
<dbReference type="AGR" id="RGD:619909"/>
<dbReference type="CTD" id="115106"/>
<dbReference type="RGD" id="619909">
    <property type="gene designation" value="Haus1"/>
</dbReference>
<dbReference type="eggNOG" id="ENOG502QSQA">
    <property type="taxonomic scope" value="Eukaryota"/>
</dbReference>
<dbReference type="GeneTree" id="ENSGT00390000006029"/>
<dbReference type="HOGENOM" id="CLU_063322_0_0_1"/>
<dbReference type="InParanoid" id="Q9R0A8"/>
<dbReference type="OMA" id="CEAQMES"/>
<dbReference type="OrthoDB" id="5372507at2759"/>
<dbReference type="PhylomeDB" id="Q9R0A8"/>
<dbReference type="TreeFam" id="TF331717"/>
<dbReference type="Reactome" id="R-RNO-2565942">
    <property type="pathway name" value="Regulation of PLK1 Activity at G2/M Transition"/>
</dbReference>
<dbReference type="Reactome" id="R-RNO-380259">
    <property type="pathway name" value="Loss of Nlp from mitotic centrosomes"/>
</dbReference>
<dbReference type="Reactome" id="R-RNO-380270">
    <property type="pathway name" value="Recruitment of mitotic centrosome proteins and complexes"/>
</dbReference>
<dbReference type="Reactome" id="R-RNO-380284">
    <property type="pathway name" value="Loss of proteins required for interphase microtubule organization from the centrosome"/>
</dbReference>
<dbReference type="Reactome" id="R-RNO-380320">
    <property type="pathway name" value="Recruitment of NuMA to mitotic centrosomes"/>
</dbReference>
<dbReference type="Reactome" id="R-RNO-5620912">
    <property type="pathway name" value="Anchoring of the basal body to the plasma membrane"/>
</dbReference>
<dbReference type="Reactome" id="R-RNO-8854518">
    <property type="pathway name" value="AURKA Activation by TPX2"/>
</dbReference>
<dbReference type="PRO" id="PR:Q9R0A8"/>
<dbReference type="Proteomes" id="UP000002494">
    <property type="component" value="Chromosome 18"/>
</dbReference>
<dbReference type="Proteomes" id="UP000234681">
    <property type="component" value="Chromosome 18"/>
</dbReference>
<dbReference type="Bgee" id="ENSRNOG00000017067">
    <property type="expression patterns" value="Expressed in testis and 16 other cell types or tissues"/>
</dbReference>
<dbReference type="GO" id="GO:0005813">
    <property type="term" value="C:centrosome"/>
    <property type="evidence" value="ECO:0000266"/>
    <property type="project" value="RGD"/>
</dbReference>
<dbReference type="GO" id="GO:0005829">
    <property type="term" value="C:cytosol"/>
    <property type="evidence" value="ECO:0000318"/>
    <property type="project" value="GO_Central"/>
</dbReference>
<dbReference type="GO" id="GO:0070652">
    <property type="term" value="C:HAUS complex"/>
    <property type="evidence" value="ECO:0000250"/>
    <property type="project" value="UniProtKB"/>
</dbReference>
<dbReference type="GO" id="GO:1990498">
    <property type="term" value="C:mitotic spindle microtubule"/>
    <property type="evidence" value="ECO:0000250"/>
    <property type="project" value="UniProtKB"/>
</dbReference>
<dbReference type="GO" id="GO:0000922">
    <property type="term" value="C:spindle pole"/>
    <property type="evidence" value="ECO:0007669"/>
    <property type="project" value="UniProtKB-SubCell"/>
</dbReference>
<dbReference type="GO" id="GO:0051301">
    <property type="term" value="P:cell division"/>
    <property type="evidence" value="ECO:0007669"/>
    <property type="project" value="UniProtKB-KW"/>
</dbReference>
<dbReference type="GO" id="GO:0007098">
    <property type="term" value="P:centrosome cycle"/>
    <property type="evidence" value="ECO:0000250"/>
    <property type="project" value="UniProtKB"/>
</dbReference>
<dbReference type="GO" id="GO:0051225">
    <property type="term" value="P:spindle assembly"/>
    <property type="evidence" value="ECO:0000250"/>
    <property type="project" value="UniProtKB"/>
</dbReference>
<dbReference type="InterPro" id="IPR026243">
    <property type="entry name" value="HAUS1"/>
</dbReference>
<dbReference type="PANTHER" id="PTHR31570">
    <property type="entry name" value="HAUS AUGMIN-LIKE COMPLEX SUBUNIT 1"/>
    <property type="match status" value="1"/>
</dbReference>
<dbReference type="PANTHER" id="PTHR31570:SF1">
    <property type="entry name" value="HAUS AUGMIN-LIKE COMPLEX SUBUNIT 1"/>
    <property type="match status" value="1"/>
</dbReference>
<dbReference type="PRINTS" id="PR02087">
    <property type="entry name" value="HAUSAUGMINL1"/>
</dbReference>
<reference key="1">
    <citation type="submission" date="1998-09" db="EMBL/GenBank/DDBJ databases">
        <title>Novel rat gene.</title>
        <authorList>
            <person name="Koehler D.R."/>
            <person name="Hu J."/>
            <person name="Post M."/>
        </authorList>
    </citation>
    <scope>NUCLEOTIDE SEQUENCE [MRNA]</scope>
    <source>
        <strain>Wistar</strain>
    </source>
</reference>
<reference key="2">
    <citation type="submission" date="2005-09" db="EMBL/GenBank/DDBJ databases">
        <authorList>
            <person name="Mural R.J."/>
            <person name="Adams M.D."/>
            <person name="Myers E.W."/>
            <person name="Smith H.O."/>
            <person name="Venter J.C."/>
        </authorList>
    </citation>
    <scope>NUCLEOTIDE SEQUENCE [LARGE SCALE GENOMIC DNA]</scope>
</reference>
<reference key="3">
    <citation type="journal article" date="2004" name="Genome Res.">
        <title>The status, quality, and expansion of the NIH full-length cDNA project: the Mammalian Gene Collection (MGC).</title>
        <authorList>
            <consortium name="The MGC Project Team"/>
        </authorList>
    </citation>
    <scope>NUCLEOTIDE SEQUENCE [LARGE SCALE MRNA]</scope>
    <source>
        <strain>Brown Norway/NHsdMcwi</strain>
    </source>
</reference>
<name>HAUS1_RAT</name>
<accession>Q9R0A8</accession>
<accession>A1L123</accession>
<comment type="function">
    <text evidence="1">Contributes to mitotic spindle assembly, maintenance of centrosome integrity and completion of cytokinesis as part of the HAUS augmin-like complex.</text>
</comment>
<comment type="subunit">
    <text evidence="2">Component of the HAUS augmin-like complex. The complex interacts with the gamma-tubulin ring complex and this interaction is required for spindle assembly. Associates with microtubules. The interaction with microtubules is strong during mitosis, while it is weak or absent during interphase. It is unclear whether this interaction is direct or indirect (By similarity). Interacts with EML3 (phosphorylated form) (By similarity).</text>
</comment>
<comment type="subcellular location">
    <subcellularLocation>
        <location evidence="2">Cytoplasm</location>
    </subcellularLocation>
    <subcellularLocation>
        <location evidence="2">Cytoplasm</location>
        <location evidence="2">Cytoskeleton</location>
        <location evidence="2">Microtubule organizing center</location>
        <location evidence="2">Centrosome</location>
    </subcellularLocation>
    <subcellularLocation>
        <location evidence="2">Cytoplasm</location>
        <location evidence="2">Cytoskeleton</location>
        <location evidence="2">Spindle</location>
    </subcellularLocation>
    <subcellularLocation>
        <location evidence="2">Cytoplasm</location>
        <location evidence="2">Cytoskeleton</location>
        <location evidence="2">Spindle pole</location>
    </subcellularLocation>
    <text evidence="2">Localizes with the spindle poles in mitotic cells. In interphase, localized at the centrosome and diffusely in the cytoplasm. Localizes to mitotic spindle microtubules (By similarity).</text>
</comment>
<comment type="similarity">
    <text evidence="4">Belongs to the HAUS1 family.</text>
</comment>
<evidence type="ECO:0000250" key="1"/>
<evidence type="ECO:0000250" key="2">
    <source>
        <dbReference type="UniProtKB" id="Q96CS2"/>
    </source>
</evidence>
<evidence type="ECO:0000255" key="3"/>
<evidence type="ECO:0000305" key="4"/>
<organism>
    <name type="scientific">Rattus norvegicus</name>
    <name type="common">Rat</name>
    <dbReference type="NCBI Taxonomy" id="10116"/>
    <lineage>
        <taxon>Eukaryota</taxon>
        <taxon>Metazoa</taxon>
        <taxon>Chordata</taxon>
        <taxon>Craniata</taxon>
        <taxon>Vertebrata</taxon>
        <taxon>Euteleostomi</taxon>
        <taxon>Mammalia</taxon>
        <taxon>Eutheria</taxon>
        <taxon>Euarchontoglires</taxon>
        <taxon>Glires</taxon>
        <taxon>Rodentia</taxon>
        <taxon>Myomorpha</taxon>
        <taxon>Muroidea</taxon>
        <taxon>Muridae</taxon>
        <taxon>Murinae</taxon>
        <taxon>Rattus</taxon>
    </lineage>
</organism>
<protein>
    <recommendedName>
        <fullName>HAUS augmin-like complex subunit 1</fullName>
    </recommendedName>
    <alternativeName>
        <fullName>Coiled-coil domain-containing protein 5</fullName>
    </alternativeName>
</protein>